<organism>
    <name type="scientific">Gloeobacter violaceus (strain ATCC 29082 / PCC 7421)</name>
    <dbReference type="NCBI Taxonomy" id="251221"/>
    <lineage>
        <taxon>Bacteria</taxon>
        <taxon>Bacillati</taxon>
        <taxon>Cyanobacteriota</taxon>
        <taxon>Cyanophyceae</taxon>
        <taxon>Gloeobacterales</taxon>
        <taxon>Gloeobacteraceae</taxon>
        <taxon>Gloeobacter</taxon>
    </lineage>
</organism>
<comment type="function">
    <text evidence="1">Catalyzes the hydrolysis of fructose 1,6-bisphosphate (Fru 1,6-P2) and sedoheptulose 1,7-bisphosphate (Sed 1,7-P2) to fructose 6-phosphate and sedoheptulose 7-phosphate, respectively.</text>
</comment>
<comment type="catalytic activity">
    <reaction>
        <text>beta-D-fructose 1,6-bisphosphate + H2O = beta-D-fructose 6-phosphate + phosphate</text>
        <dbReference type="Rhea" id="RHEA:11064"/>
        <dbReference type="ChEBI" id="CHEBI:15377"/>
        <dbReference type="ChEBI" id="CHEBI:32966"/>
        <dbReference type="ChEBI" id="CHEBI:43474"/>
        <dbReference type="ChEBI" id="CHEBI:57634"/>
        <dbReference type="EC" id="3.1.3.11"/>
    </reaction>
</comment>
<comment type="catalytic activity">
    <reaction>
        <text>D-sedoheptulose 1,7-bisphosphate + H2O = D-sedoheptulose 7-phosphate + phosphate</text>
        <dbReference type="Rhea" id="RHEA:17461"/>
        <dbReference type="ChEBI" id="CHEBI:15377"/>
        <dbReference type="ChEBI" id="CHEBI:43474"/>
        <dbReference type="ChEBI" id="CHEBI:57483"/>
        <dbReference type="ChEBI" id="CHEBI:58335"/>
        <dbReference type="EC" id="3.1.3.37"/>
    </reaction>
</comment>
<comment type="cofactor">
    <cofactor evidence="1">
        <name>Mn(2+)</name>
        <dbReference type="ChEBI" id="CHEBI:29035"/>
    </cofactor>
</comment>
<comment type="pathway">
    <text>Carbohydrate biosynthesis; Calvin cycle.</text>
</comment>
<comment type="subunit">
    <text evidence="1">Homotetramer.</text>
</comment>
<comment type="similarity">
    <text evidence="2">Belongs to the FBPase class 2 family.</text>
</comment>
<gene>
    <name type="ordered locus">glr3342</name>
</gene>
<proteinExistence type="inferred from homology"/>
<protein>
    <recommendedName>
        <fullName>D-fructose 1,6-bisphosphatase class 2/sedoheptulose 1,7-bisphosphatase</fullName>
        <shortName>FBPase class 2/SBPase</shortName>
        <ecNumber>3.1.3.11</ecNumber>
        <ecNumber>3.1.3.37</ecNumber>
    </recommendedName>
</protein>
<accession>Q7NG31</accession>
<dbReference type="EC" id="3.1.3.11"/>
<dbReference type="EC" id="3.1.3.37"/>
<dbReference type="EMBL" id="BA000045">
    <property type="protein sequence ID" value="BAC91283.1"/>
    <property type="molecule type" value="Genomic_DNA"/>
</dbReference>
<dbReference type="RefSeq" id="NP_926288.1">
    <property type="nucleotide sequence ID" value="NC_005125.1"/>
</dbReference>
<dbReference type="RefSeq" id="WP_011143332.1">
    <property type="nucleotide sequence ID" value="NC_005125.1"/>
</dbReference>
<dbReference type="SMR" id="Q7NG31"/>
<dbReference type="FunCoup" id="Q7NG31">
    <property type="interactions" value="55"/>
</dbReference>
<dbReference type="STRING" id="251221.gene:10760853"/>
<dbReference type="EnsemblBacteria" id="BAC91283">
    <property type="protein sequence ID" value="BAC91283"/>
    <property type="gene ID" value="BAC91283"/>
</dbReference>
<dbReference type="KEGG" id="gvi:glr3342"/>
<dbReference type="PATRIC" id="fig|251221.4.peg.3373"/>
<dbReference type="eggNOG" id="COG1494">
    <property type="taxonomic scope" value="Bacteria"/>
</dbReference>
<dbReference type="HOGENOM" id="CLU_054938_0_0_3"/>
<dbReference type="InParanoid" id="Q7NG31"/>
<dbReference type="OrthoDB" id="9779353at2"/>
<dbReference type="PhylomeDB" id="Q7NG31"/>
<dbReference type="UniPathway" id="UPA00116"/>
<dbReference type="Proteomes" id="UP000000557">
    <property type="component" value="Chromosome"/>
</dbReference>
<dbReference type="GO" id="GO:0042132">
    <property type="term" value="F:fructose 1,6-bisphosphate 1-phosphatase activity"/>
    <property type="evidence" value="ECO:0000318"/>
    <property type="project" value="GO_Central"/>
</dbReference>
<dbReference type="GO" id="GO:0046872">
    <property type="term" value="F:metal ion binding"/>
    <property type="evidence" value="ECO:0007669"/>
    <property type="project" value="UniProtKB-KW"/>
</dbReference>
<dbReference type="GO" id="GO:0050278">
    <property type="term" value="F:sedoheptulose-bisphosphatase activity"/>
    <property type="evidence" value="ECO:0007669"/>
    <property type="project" value="UniProtKB-EC"/>
</dbReference>
<dbReference type="GO" id="GO:0030388">
    <property type="term" value="P:fructose 1,6-bisphosphate metabolic process"/>
    <property type="evidence" value="ECO:0000318"/>
    <property type="project" value="GO_Central"/>
</dbReference>
<dbReference type="GO" id="GO:0006094">
    <property type="term" value="P:gluconeogenesis"/>
    <property type="evidence" value="ECO:0000318"/>
    <property type="project" value="GO_Central"/>
</dbReference>
<dbReference type="GO" id="GO:0006071">
    <property type="term" value="P:glycerol metabolic process"/>
    <property type="evidence" value="ECO:0007669"/>
    <property type="project" value="InterPro"/>
</dbReference>
<dbReference type="GO" id="GO:0019253">
    <property type="term" value="P:reductive pentose-phosphate cycle"/>
    <property type="evidence" value="ECO:0007669"/>
    <property type="project" value="UniProtKB-UniPathway"/>
</dbReference>
<dbReference type="CDD" id="cd01516">
    <property type="entry name" value="FBPase_glpX"/>
    <property type="match status" value="1"/>
</dbReference>
<dbReference type="FunFam" id="3.40.190.90:FF:000001">
    <property type="entry name" value="Fructose-1,6-bisphosphatase"/>
    <property type="match status" value="1"/>
</dbReference>
<dbReference type="Gene3D" id="3.40.190.90">
    <property type="match status" value="1"/>
</dbReference>
<dbReference type="Gene3D" id="3.30.540.10">
    <property type="entry name" value="Fructose-1,6-Bisphosphatase, subunit A, domain 1"/>
    <property type="match status" value="1"/>
</dbReference>
<dbReference type="InterPro" id="IPR004464">
    <property type="entry name" value="FBPase_class-2/SBPase"/>
</dbReference>
<dbReference type="NCBIfam" id="TIGR00330">
    <property type="entry name" value="glpX"/>
    <property type="match status" value="1"/>
</dbReference>
<dbReference type="PANTHER" id="PTHR30447:SF0">
    <property type="entry name" value="FRUCTOSE-1,6-BISPHOSPHATASE 1 CLASS 2-RELATED"/>
    <property type="match status" value="1"/>
</dbReference>
<dbReference type="PANTHER" id="PTHR30447">
    <property type="entry name" value="FRUCTOSE-1,6-BISPHOSPHATASE CLASS 2"/>
    <property type="match status" value="1"/>
</dbReference>
<dbReference type="Pfam" id="PF03320">
    <property type="entry name" value="FBPase_glpX"/>
    <property type="match status" value="1"/>
</dbReference>
<dbReference type="PIRSF" id="PIRSF004532">
    <property type="entry name" value="GlpX"/>
    <property type="match status" value="1"/>
</dbReference>
<dbReference type="SUPFAM" id="SSF56655">
    <property type="entry name" value="Carbohydrate phosphatase"/>
    <property type="match status" value="1"/>
</dbReference>
<keyword id="KW-0113">Calvin cycle</keyword>
<keyword id="KW-0119">Carbohydrate metabolism</keyword>
<keyword id="KW-0378">Hydrolase</keyword>
<keyword id="KW-0464">Manganese</keyword>
<keyword id="KW-0479">Metal-binding</keyword>
<keyword id="KW-1185">Reference proteome</keyword>
<evidence type="ECO:0000250" key="1"/>
<evidence type="ECO:0000305" key="2"/>
<name>FBSB_GLOVI</name>
<feature type="chain" id="PRO_0000342711" description="D-fructose 1,6-bisphosphatase class 2/sedoheptulose 1,7-bisphosphatase">
    <location>
        <begin position="1"/>
        <end position="346"/>
    </location>
</feature>
<feature type="binding site" evidence="1">
    <location>
        <position position="33"/>
    </location>
    <ligand>
        <name>Mn(2+)</name>
        <dbReference type="ChEBI" id="CHEBI:29035"/>
        <label>1</label>
    </ligand>
</feature>
<feature type="binding site" evidence="1">
    <location>
        <position position="57"/>
    </location>
    <ligand>
        <name>Mn(2+)</name>
        <dbReference type="ChEBI" id="CHEBI:29035"/>
        <label>1</label>
    </ligand>
</feature>
<feature type="binding site" evidence="1">
    <location>
        <position position="97"/>
    </location>
    <ligand>
        <name>Mn(2+)</name>
        <dbReference type="ChEBI" id="CHEBI:29035"/>
        <label>2</label>
    </ligand>
</feature>
<feature type="binding site" evidence="1">
    <location>
        <begin position="100"/>
        <end position="102"/>
    </location>
    <ligand>
        <name>substrate</name>
    </ligand>
</feature>
<feature type="binding site" evidence="1">
    <location>
        <position position="100"/>
    </location>
    <ligand>
        <name>Mn(2+)</name>
        <dbReference type="ChEBI" id="CHEBI:29035"/>
        <label>2</label>
    </ligand>
</feature>
<feature type="binding site" evidence="1">
    <location>
        <position position="131"/>
    </location>
    <ligand>
        <name>substrate</name>
    </ligand>
</feature>
<feature type="binding site" evidence="1">
    <location>
        <begin position="176"/>
        <end position="178"/>
    </location>
    <ligand>
        <name>substrate</name>
    </ligand>
</feature>
<feature type="binding site" evidence="1">
    <location>
        <begin position="198"/>
        <end position="200"/>
    </location>
    <ligand>
        <name>substrate</name>
    </ligand>
</feature>
<feature type="binding site" evidence="1">
    <location>
        <position position="225"/>
    </location>
    <ligand>
        <name>Mn(2+)</name>
        <dbReference type="ChEBI" id="CHEBI:29035"/>
        <label>2</label>
    </ligand>
</feature>
<sequence length="346" mass="37030">MEKTLGLEIIEVVEQAAIASARLMGKGLRNEADGVAVKAMRDRMNQIYMRGRIVIGEGERDDAPMLYIGEQVGICTQPNAAQMCSIDELLEIDIAVDPCEGTNLVAEGRQGSMAVLAISEKGGLLGAPDLYMKKLAAPPQAKGKVHIDYPATKNLQIIAECLDRAIEDLVVIVMKRDRHKDLISEIRSTGARVRFIDDGDISAALSAGINGTGVHALMGIGAAPEGVISAAALRCLGSHFQGQLIYDPDVVQTGLLKGTKAEIEEQLKAQGVEQPDKVWEAEELASGKNVLFAACGITDGDFIKGVRFFTGSARTETMVISSQSNTVRFVDTVHILDPAHHASLVI</sequence>
<reference key="1">
    <citation type="journal article" date="2003" name="DNA Res.">
        <title>Complete genome structure of Gloeobacter violaceus PCC 7421, a cyanobacterium that lacks thylakoids.</title>
        <authorList>
            <person name="Nakamura Y."/>
            <person name="Kaneko T."/>
            <person name="Sato S."/>
            <person name="Mimuro M."/>
            <person name="Miyashita H."/>
            <person name="Tsuchiya T."/>
            <person name="Sasamoto S."/>
            <person name="Watanabe A."/>
            <person name="Kawashima K."/>
            <person name="Kishida Y."/>
            <person name="Kiyokawa C."/>
            <person name="Kohara M."/>
            <person name="Matsumoto M."/>
            <person name="Matsuno A."/>
            <person name="Nakazaki N."/>
            <person name="Shimpo S."/>
            <person name="Takeuchi C."/>
            <person name="Yamada M."/>
            <person name="Tabata S."/>
        </authorList>
    </citation>
    <scope>NUCLEOTIDE SEQUENCE [LARGE SCALE GENOMIC DNA]</scope>
    <source>
        <strain>ATCC 29082 / PCC 7421</strain>
    </source>
</reference>